<dbReference type="EMBL" id="Z35481">
    <property type="protein sequence ID" value="CAA84618.1"/>
    <property type="molecule type" value="mRNA"/>
</dbReference>
<dbReference type="PIR" id="A57630">
    <property type="entry name" value="A57630"/>
</dbReference>
<dbReference type="RefSeq" id="NP_001166486.1">
    <property type="nucleotide sequence ID" value="NM_001173015.1"/>
</dbReference>
<dbReference type="SMR" id="P63209"/>
<dbReference type="BioGRID" id="1642085">
    <property type="interactions" value="1"/>
</dbReference>
<dbReference type="FunCoup" id="P63209">
    <property type="interactions" value="3432"/>
</dbReference>
<dbReference type="MINT" id="P63209"/>
<dbReference type="STRING" id="10141.ENSCPOP00000004645"/>
<dbReference type="GeneID" id="100135616"/>
<dbReference type="KEGG" id="cpoc:100135616"/>
<dbReference type="CTD" id="6500"/>
<dbReference type="eggNOG" id="KOG1724">
    <property type="taxonomic scope" value="Eukaryota"/>
</dbReference>
<dbReference type="HOGENOM" id="CLU_059252_7_0_1"/>
<dbReference type="InParanoid" id="P63209"/>
<dbReference type="OrthoDB" id="2342932at2759"/>
<dbReference type="UniPathway" id="UPA00143"/>
<dbReference type="Proteomes" id="UP000005447">
    <property type="component" value="Unassembled WGS sequence"/>
</dbReference>
<dbReference type="GO" id="GO:0031467">
    <property type="term" value="C:Cul7-RING ubiquitin ligase complex"/>
    <property type="evidence" value="ECO:0000250"/>
    <property type="project" value="UniProtKB"/>
</dbReference>
<dbReference type="GO" id="GO:0005829">
    <property type="term" value="C:cytosol"/>
    <property type="evidence" value="ECO:0000250"/>
    <property type="project" value="UniProtKB"/>
</dbReference>
<dbReference type="GO" id="GO:0019005">
    <property type="term" value="C:SCF ubiquitin ligase complex"/>
    <property type="evidence" value="ECO:0000250"/>
    <property type="project" value="UniProtKB"/>
</dbReference>
<dbReference type="GO" id="GO:0016567">
    <property type="term" value="P:protein ubiquitination"/>
    <property type="evidence" value="ECO:0007669"/>
    <property type="project" value="UniProtKB-UniPathway"/>
</dbReference>
<dbReference type="GO" id="GO:0031146">
    <property type="term" value="P:SCF-dependent proteasomal ubiquitin-dependent protein catabolic process"/>
    <property type="evidence" value="ECO:0000250"/>
    <property type="project" value="UniProtKB"/>
</dbReference>
<dbReference type="CDD" id="cd18322">
    <property type="entry name" value="BTB_POZ_SKP1"/>
    <property type="match status" value="1"/>
</dbReference>
<dbReference type="FunFam" id="3.30.710.10:FF:000270">
    <property type="entry name" value="S-phase kinase-associated protein 1"/>
    <property type="match status" value="1"/>
</dbReference>
<dbReference type="Gene3D" id="3.30.710.10">
    <property type="entry name" value="Potassium Channel Kv1.1, Chain A"/>
    <property type="match status" value="1"/>
</dbReference>
<dbReference type="InterPro" id="IPR016897">
    <property type="entry name" value="SKP1"/>
</dbReference>
<dbReference type="InterPro" id="IPR001232">
    <property type="entry name" value="SKP1-like"/>
</dbReference>
<dbReference type="InterPro" id="IPR036296">
    <property type="entry name" value="SKP1-like_dim_sf"/>
</dbReference>
<dbReference type="InterPro" id="IPR011333">
    <property type="entry name" value="SKP1/BTB/POZ_sf"/>
</dbReference>
<dbReference type="InterPro" id="IPR016072">
    <property type="entry name" value="Skp1_comp_dimer"/>
</dbReference>
<dbReference type="InterPro" id="IPR016073">
    <property type="entry name" value="Skp1_comp_POZ"/>
</dbReference>
<dbReference type="PANTHER" id="PTHR11165">
    <property type="entry name" value="SKP1"/>
    <property type="match status" value="1"/>
</dbReference>
<dbReference type="Pfam" id="PF01466">
    <property type="entry name" value="Skp1"/>
    <property type="match status" value="1"/>
</dbReference>
<dbReference type="Pfam" id="PF03931">
    <property type="entry name" value="Skp1_POZ"/>
    <property type="match status" value="1"/>
</dbReference>
<dbReference type="PIRSF" id="PIRSF028729">
    <property type="entry name" value="E3_ubiquit_lig_SCF_Skp"/>
    <property type="match status" value="1"/>
</dbReference>
<dbReference type="SMART" id="SM00512">
    <property type="entry name" value="Skp1"/>
    <property type="match status" value="1"/>
</dbReference>
<dbReference type="SUPFAM" id="SSF54695">
    <property type="entry name" value="POZ domain"/>
    <property type="match status" value="1"/>
</dbReference>
<dbReference type="SUPFAM" id="SSF81382">
    <property type="entry name" value="Skp1 dimerisation domain-like"/>
    <property type="match status" value="1"/>
</dbReference>
<gene>
    <name type="primary">SKP1</name>
    <name type="synonym">OCP2</name>
    <name type="synonym">SKP1A</name>
</gene>
<organism>
    <name type="scientific">Cavia porcellus</name>
    <name type="common">Guinea pig</name>
    <dbReference type="NCBI Taxonomy" id="10141"/>
    <lineage>
        <taxon>Eukaryota</taxon>
        <taxon>Metazoa</taxon>
        <taxon>Chordata</taxon>
        <taxon>Craniata</taxon>
        <taxon>Vertebrata</taxon>
        <taxon>Euteleostomi</taxon>
        <taxon>Mammalia</taxon>
        <taxon>Eutheria</taxon>
        <taxon>Euarchontoglires</taxon>
        <taxon>Glires</taxon>
        <taxon>Rodentia</taxon>
        <taxon>Hystricomorpha</taxon>
        <taxon>Caviidae</taxon>
        <taxon>Cavia</taxon>
    </lineage>
</organism>
<name>SKP1_CAVPO</name>
<accession>P63209</accession>
<accession>P34991</accession>
<accession>Q8TAY2</accession>
<comment type="function">
    <text evidence="2">Essential component of the SCF (SKP1-CUL1-F-box protein) ubiquitin ligase complex, which mediates the ubiquitination of proteins involved in cell cycle progression, signal transduction and transcription. In the SCF complex, serves as an adapter that links the F-box protein to CUL1. The functional specificity of the SCF complex depends on the F-box protein as substrate recognition component. SCF(BTRC) and SCF(FBXW11) direct ubiquitination of CTNNB1 and participate in Wnt signaling. SCF(FBXW11) directs ubiquitination of phosphorylated NFKBIA. SCF(BTRC) directs ubiquitination of NFKBIB, NFKBIE, ATF4, SMAD3, SMAD4, CDC25A, FBXO5, CEP68 and probably NFKB2. SCF(SKP2) directs ubiquitination of phosphorylated CDKN1B/p27kip and is involved in regulation of G1/S transition. SCF(SKP2) directs ubiquitination of ORC1, CDT1, RBL2, ELF4, CDKN1A, RAG2, FOXO1A, and probably MYC and TAL1. SCF(FBXW7) directs ubiquitination of cyclin E, NOTCH1 released notch intracellular domain (NICD), and probably PSEN1. SCF(FBXW2) directs ubiquitination of GCM1. SCF(FBXO32) directs ubiquitination of MYOD1. SCF(FBXO7) directs ubiquitination of BIRC2 and DLGAP5. SCF(FBXO33) directs ubiquitination of YBX1. SCF(FBXO11) directs ubiquitination of BCL6 and DTL but does not seem to direct ubiquitination of TP53. SCF(BTRC) mediates the ubiquitination of NFKBIA at 'Lys-21' and 'Lys-22'; the degradation frees the associated NFKB1-RELA dimer to translocate into the nucleus and to activate transcription. SCF(CCNF) directs ubiquitination of CCP110. SCF(FBXL3) and SCF(FBXL21) direct ubiquitination of CRY1 and CRY2. SCF(FBXO9) direct ubiquitination of TTI1 and TELO2. SCF(FBXO10) direct ubiquitination of BCL2. Core component of the Cul7-RING(FBXW8) ubiquitin ligase complex, which mediates the ubiquitination and subsequent proteasomal degradation of target proteins. Also acts as a core component of the Cul1-RING(FBXL4) ubiquitin ligase complex, which mediates the ubiquitination and subsequent proteasomal degradation of BNIP3 and BNIP3L (By similarity).</text>
</comment>
<comment type="pathway">
    <text>Protein modification; protein ubiquitination.</text>
</comment>
<comment type="subunit">
    <text evidence="2 3">Interacts with KDM2B, forming heterodimers (By similarity). The KDM2B-SKP1 heterodimeric complex interacts with the PCGF1-BCORL heterodimeric complex to form a homotetrameric polycomb repression complex 1 (PRC1.1) (By similarity). Component of multiple SCF (SKP1-CUL1-F-box) E3 ubiquitin-protein ligase complexes formed of CUL1, SKP1, RBX1 and a variable F-box domain-containing protein as substrate-specific subunit. Component of the SCF(FBXW11) complex containing FBXW11. Component of the SCF(SKP2) complex containing SKP2, in which it interacts directly with SKP1, SKP2 and RBX1. Component of the SCF(FBXW2) complex containing FBXw2. Component of the SCF(FBXO32) complex containing FBXO32. Component of the probable SCF(FBXO7) complex containing FBXO7. Component of the SCF(FBXO10) complex containing FBXO10. Component of the SCF(FBXO11) complex containing FBXO11. Component of the SCF(FBXO25) complex containing FBXO25. Component of the SCF(FBXO33) complex containing FBXO33. Component of the probable SCF(FBXO4) complex containing FBXO4. Component of the SCF(FBXO44) complex, composed of SKP1, CUL1 and FBXO44. Component of the SCF(BTRC) complex, composed of SKP1, CUL1 and BTRC. This complex binds phosphorylated NFKBIA. Part of a SCF complex consisting of CUL1, RBX1, SKP1 and FBXO2. Component of a SCF(SKP2)-like complex containing CUL1, SKP1, TRIM21 and SKP2. Component of the SCF(FBXO17) complex, composed of SKP1, CUL1 and FBXO17. Component of the SCF(FBXO27) complex, composed of SKP1, CUL1 and FBXO27. Component of the SCF(CCNF) complex consisting of CUL1, RBX1, SKP1 and CCNF. Component of the SCF(FBXL3) complex composed of CUL1, SKP1, RBX1 and FBXL3. Component of the SCF(FBXL21) complex composed of CUL1, SKP1, RBX1 and FBXL21. Component of the SCF(FBXO9) composed of CUL1, SKP1, RBX1 and FBXO9. Component of the SCF(FBXW7) composed of CUL1, SKP1, RBX1 and FBXW7. Component of the SCF(FBXO31) complex composed of CUL1, SKP1, RBX1 and FBXO31 (By similarity). Interacts with CEP68 (By similarity). Interacts with NOTCH2 and FBXW15 (By similarity). The SKP1-KDM2A and SKP1-KDM2B complexes interact with UBB (By similarity). Component of the Cul7-RING(FBXW8) complex consisting of CUL7, RBX1, SKP1 and FBXW8; within the complex interacts with FBXW8 (By similarity). Interacts with BCORL1 (By similarity). Interacts with FBXL4 (By similarity).</text>
</comment>
<comment type="tissue specificity">
    <text evidence="5">Expressed abundantly in the cochlea while not significantly in any other tissues examined, including brain, eye, heart, intestine, kidney, liver, lung, thigh muscle, and testis.</text>
</comment>
<comment type="PTM">
    <text evidence="3">Undergoes autophagy-mediated degradation in the liver in a time-dependent manner.</text>
</comment>
<comment type="similarity">
    <text evidence="6">Belongs to the SKP1 family.</text>
</comment>
<proteinExistence type="evidence at transcript level"/>
<evidence type="ECO:0000250" key="1"/>
<evidence type="ECO:0000250" key="2">
    <source>
        <dbReference type="UniProtKB" id="P63208"/>
    </source>
</evidence>
<evidence type="ECO:0000250" key="3">
    <source>
        <dbReference type="UniProtKB" id="Q9WTX5"/>
    </source>
</evidence>
<evidence type="ECO:0000256" key="4">
    <source>
        <dbReference type="SAM" id="MobiDB-lite"/>
    </source>
</evidence>
<evidence type="ECO:0000269" key="5">
    <source>
    </source>
</evidence>
<evidence type="ECO:0000305" key="6"/>
<feature type="chain" id="PRO_0000187250" description="S-phase kinase-associated protein 1">
    <location>
        <begin position="1"/>
        <end position="163"/>
    </location>
</feature>
<feature type="region of interest" description="Disordered" evidence="4">
    <location>
        <begin position="63"/>
        <end position="83"/>
    </location>
</feature>
<feature type="region of interest" description="Interaction with the F-box domain of F-box proteins" evidence="1">
    <location>
        <begin position="104"/>
        <end position="163"/>
    </location>
</feature>
<feature type="modified residue" description="Phosphothreonine" evidence="2">
    <location>
        <position position="131"/>
    </location>
</feature>
<feature type="cross-link" description="Glycyl lysine isopeptide (Lys-Gly) (interchain with G-Cter in SUMO1)" evidence="2">
    <location>
        <position position="142"/>
    </location>
</feature>
<protein>
    <recommendedName>
        <fullName>S-phase kinase-associated protein 1</fullName>
    </recommendedName>
    <alternativeName>
        <fullName>Cyclin-A/CDK2-associated protein p19</fullName>
    </alternativeName>
    <alternativeName>
        <fullName>Organ of Corti protein 2</fullName>
        <shortName>OCP-2</shortName>
    </alternativeName>
    <alternativeName>
        <fullName>Organ of Corti protein II</fullName>
        <shortName>OCP-II</shortName>
    </alternativeName>
    <alternativeName>
        <fullName>S-phase kinase-associated protein 1A</fullName>
    </alternativeName>
    <alternativeName>
        <fullName>p19A</fullName>
    </alternativeName>
    <alternativeName>
        <fullName>p19skp1</fullName>
    </alternativeName>
</protein>
<reference key="1">
    <citation type="journal article" date="1995" name="Genomics">
        <title>cDNA cloning, tissue distribution, and chromosomal localization of Ocp2, a gene encoding a putative transcription-associated factor predominantly expressed in the auditory organs.</title>
        <authorList>
            <person name="Chen H."/>
            <person name="Thalmann I."/>
            <person name="Adams J.C."/>
            <person name="Avraham K.B."/>
            <person name="Copeland N.G."/>
            <person name="Jenkins N.A."/>
            <person name="Beier D.R."/>
            <person name="Corey D.P."/>
            <person name="Thalmann R."/>
            <person name="Duyk G.M."/>
        </authorList>
    </citation>
    <scope>NUCLEOTIDE SEQUENCE [MRNA]</scope>
    <scope>TISSUE SPECIFICITY</scope>
    <source>
        <strain>NIH</strain>
        <tissue>Organ of Corti</tissue>
    </source>
</reference>
<keyword id="KW-1017">Isopeptide bond</keyword>
<keyword id="KW-0597">Phosphoprotein</keyword>
<keyword id="KW-1185">Reference proteome</keyword>
<keyword id="KW-0832">Ubl conjugation</keyword>
<keyword id="KW-0833">Ubl conjugation pathway</keyword>
<sequence length="163" mass="18658">MPSIKLQSSDGEIFEVDVEIAKQSVTIKTMLEDLGMDDEGDDDPVPLPNVNAAILKKVIQWCTHHKDDPPPPEDDENKEKRTDDIPVWDQEFLKVDQGTLFELILAANYLDIKGLLDVTCKTVANMIKGKTPEEIRKTFNIKNDFTEEEEAQVRKENQWCEEK</sequence>